<sequence>MKTILPAVLFAAFATTSAWAAESVQPLEKIAPYPQAEKGMKRQVIQLTPQEDESTLKVELLIGQTLEVDCNLHRLGGKLESKTLEGWGYDYYVFDKVSSPVSTMMACPDGKKEKKFVTAYLGDAGMLRYNSKLPIVVYTPDNVDVKYRVWKAEEKIDNAVVR</sequence>
<proteinExistence type="inferred from homology"/>
<name>ECOT_ECOL6</name>
<evidence type="ECO:0000255" key="1">
    <source>
        <dbReference type="HAMAP-Rule" id="MF_00706"/>
    </source>
</evidence>
<evidence type="ECO:0000305" key="2"/>
<protein>
    <recommendedName>
        <fullName evidence="1">Ecotin</fullName>
    </recommendedName>
</protein>
<feature type="signal peptide" evidence="1">
    <location>
        <begin position="1"/>
        <end position="20"/>
    </location>
</feature>
<feature type="chain" id="PRO_0000007424" description="Ecotin">
    <location>
        <begin position="21"/>
        <end position="162"/>
    </location>
</feature>
<feature type="site" description="Reactive bond" evidence="1">
    <location>
        <begin position="104"/>
        <end position="105"/>
    </location>
</feature>
<feature type="disulfide bond" evidence="1">
    <location>
        <begin position="70"/>
        <end position="107"/>
    </location>
</feature>
<gene>
    <name evidence="1" type="primary">eco</name>
    <name type="ordered locus">c2750</name>
</gene>
<dbReference type="EMBL" id="AE014075">
    <property type="protein sequence ID" value="AAN81204.1"/>
    <property type="status" value="ALT_INIT"/>
    <property type="molecule type" value="Genomic_DNA"/>
</dbReference>
<dbReference type="SMR" id="Q8CVW3"/>
<dbReference type="STRING" id="199310.c2750"/>
<dbReference type="MEROPS" id="I11.001"/>
<dbReference type="KEGG" id="ecc:c2750"/>
<dbReference type="eggNOG" id="COG4574">
    <property type="taxonomic scope" value="Bacteria"/>
</dbReference>
<dbReference type="HOGENOM" id="CLU_111565_0_0_6"/>
<dbReference type="Proteomes" id="UP000001410">
    <property type="component" value="Chromosome"/>
</dbReference>
<dbReference type="GO" id="GO:0042597">
    <property type="term" value="C:periplasmic space"/>
    <property type="evidence" value="ECO:0007669"/>
    <property type="project" value="UniProtKB-SubCell"/>
</dbReference>
<dbReference type="GO" id="GO:0004867">
    <property type="term" value="F:serine-type endopeptidase inhibitor activity"/>
    <property type="evidence" value="ECO:0007669"/>
    <property type="project" value="UniProtKB-UniRule"/>
</dbReference>
<dbReference type="CDD" id="cd00242">
    <property type="entry name" value="Ecotin"/>
    <property type="match status" value="1"/>
</dbReference>
<dbReference type="FunFam" id="2.60.40.550:FF:000001">
    <property type="entry name" value="Ecotin"/>
    <property type="match status" value="1"/>
</dbReference>
<dbReference type="FunFam" id="4.10.1230.10:FF:000001">
    <property type="entry name" value="Ecotin"/>
    <property type="match status" value="1"/>
</dbReference>
<dbReference type="Gene3D" id="2.60.40.550">
    <property type="entry name" value="Ecotin"/>
    <property type="match status" value="1"/>
</dbReference>
<dbReference type="Gene3D" id="4.10.1230.10">
    <property type="entry name" value="Ecotin, trypsin inhibitor"/>
    <property type="match status" value="1"/>
</dbReference>
<dbReference type="HAMAP" id="MF_00706">
    <property type="entry name" value="Ecotin"/>
    <property type="match status" value="1"/>
</dbReference>
<dbReference type="InterPro" id="IPR027438">
    <property type="entry name" value="Ecotin_C"/>
</dbReference>
<dbReference type="InterPro" id="IPR036198">
    <property type="entry name" value="Ecotin_sf"/>
</dbReference>
<dbReference type="InterPro" id="IPR005658">
    <property type="entry name" value="Prot_inh_ecotin"/>
</dbReference>
<dbReference type="InterPro" id="IPR023084">
    <property type="entry name" value="Prot_inh_ecotin_gammaproteobac"/>
</dbReference>
<dbReference type="NCBIfam" id="NF002987">
    <property type="entry name" value="PRK03719.1"/>
    <property type="match status" value="1"/>
</dbReference>
<dbReference type="PANTHER" id="PTHR35890">
    <property type="match status" value="1"/>
</dbReference>
<dbReference type="PANTHER" id="PTHR35890:SF3">
    <property type="entry name" value="ECOTIN"/>
    <property type="match status" value="1"/>
</dbReference>
<dbReference type="Pfam" id="PF03974">
    <property type="entry name" value="Ecotin"/>
    <property type="match status" value="1"/>
</dbReference>
<dbReference type="PIRSF" id="PIRSF006865">
    <property type="entry name" value="Prot_inh_ecotin"/>
    <property type="match status" value="1"/>
</dbReference>
<dbReference type="SUPFAM" id="SSF49772">
    <property type="entry name" value="Ecotin, trypsin inhibitor"/>
    <property type="match status" value="1"/>
</dbReference>
<organism>
    <name type="scientific">Escherichia coli O6:H1 (strain CFT073 / ATCC 700928 / UPEC)</name>
    <dbReference type="NCBI Taxonomy" id="199310"/>
    <lineage>
        <taxon>Bacteria</taxon>
        <taxon>Pseudomonadati</taxon>
        <taxon>Pseudomonadota</taxon>
        <taxon>Gammaproteobacteria</taxon>
        <taxon>Enterobacterales</taxon>
        <taxon>Enterobacteriaceae</taxon>
        <taxon>Escherichia</taxon>
    </lineage>
</organism>
<reference key="1">
    <citation type="journal article" date="2002" name="Proc. Natl. Acad. Sci. U.S.A.">
        <title>Extensive mosaic structure revealed by the complete genome sequence of uropathogenic Escherichia coli.</title>
        <authorList>
            <person name="Welch R.A."/>
            <person name="Burland V."/>
            <person name="Plunkett G. III"/>
            <person name="Redford P."/>
            <person name="Roesch P."/>
            <person name="Rasko D."/>
            <person name="Buckles E.L."/>
            <person name="Liou S.-R."/>
            <person name="Boutin A."/>
            <person name="Hackett J."/>
            <person name="Stroud D."/>
            <person name="Mayhew G.F."/>
            <person name="Rose D.J."/>
            <person name="Zhou S."/>
            <person name="Schwartz D.C."/>
            <person name="Perna N.T."/>
            <person name="Mobley H.L.T."/>
            <person name="Donnenberg M.S."/>
            <person name="Blattner F.R."/>
        </authorList>
    </citation>
    <scope>NUCLEOTIDE SEQUENCE [LARGE SCALE GENOMIC DNA]</scope>
    <source>
        <strain>CFT073 / ATCC 700928 / UPEC</strain>
    </source>
</reference>
<keyword id="KW-1015">Disulfide bond</keyword>
<keyword id="KW-0574">Periplasm</keyword>
<keyword id="KW-0646">Protease inhibitor</keyword>
<keyword id="KW-1185">Reference proteome</keyword>
<keyword id="KW-0722">Serine protease inhibitor</keyword>
<keyword id="KW-0732">Signal</keyword>
<accession>Q8CVW3</accession>
<comment type="function">
    <text evidence="1">General inhibitor of pancreatic serine proteases: inhibits chymotrypsin, trypsin, elastases, factor X, kallikrein as well as a variety of other proteases.</text>
</comment>
<comment type="subunit">
    <text evidence="1">Homodimer.</text>
</comment>
<comment type="subcellular location">
    <subcellularLocation>
        <location evidence="1">Periplasm</location>
    </subcellularLocation>
</comment>
<comment type="similarity">
    <text evidence="1">Belongs to the protease inhibitor I11 (ecotin) family.</text>
</comment>
<comment type="sequence caution" evidence="2">
    <conflict type="erroneous initiation">
        <sequence resource="EMBL-CDS" id="AAN81204"/>
    </conflict>
</comment>